<protein>
    <recommendedName>
        <fullName evidence="1">1-(5-phosphoribosyl)-5-[(5-phosphoribosylamino)methylideneamino] imidazole-4-carboxamide isomerase</fullName>
        <ecNumber evidence="1">5.3.1.16</ecNumber>
    </recommendedName>
    <alternativeName>
        <fullName evidence="1">Phosphoribosylformimino-5-aminoimidazole carboxamide ribotide isomerase</fullName>
    </alternativeName>
</protein>
<proteinExistence type="inferred from homology"/>
<gene>
    <name evidence="1" type="primary">hisA</name>
    <name type="ordered locus">Cphamn1_0475</name>
</gene>
<organism>
    <name type="scientific">Chlorobium phaeobacteroides (strain BS1)</name>
    <dbReference type="NCBI Taxonomy" id="331678"/>
    <lineage>
        <taxon>Bacteria</taxon>
        <taxon>Pseudomonadati</taxon>
        <taxon>Chlorobiota</taxon>
        <taxon>Chlorobiia</taxon>
        <taxon>Chlorobiales</taxon>
        <taxon>Chlorobiaceae</taxon>
        <taxon>Chlorobium/Pelodictyon group</taxon>
        <taxon>Chlorobium</taxon>
    </lineage>
</organism>
<accession>B3EM61</accession>
<keyword id="KW-0028">Amino-acid biosynthesis</keyword>
<keyword id="KW-0963">Cytoplasm</keyword>
<keyword id="KW-0368">Histidine biosynthesis</keyword>
<keyword id="KW-0413">Isomerase</keyword>
<comment type="catalytic activity">
    <reaction evidence="1">
        <text>1-(5-phospho-beta-D-ribosyl)-5-[(5-phospho-beta-D-ribosylamino)methylideneamino]imidazole-4-carboxamide = 5-[(5-phospho-1-deoxy-D-ribulos-1-ylimino)methylamino]-1-(5-phospho-beta-D-ribosyl)imidazole-4-carboxamide</text>
        <dbReference type="Rhea" id="RHEA:15469"/>
        <dbReference type="ChEBI" id="CHEBI:58435"/>
        <dbReference type="ChEBI" id="CHEBI:58525"/>
        <dbReference type="EC" id="5.3.1.16"/>
    </reaction>
</comment>
<comment type="pathway">
    <text evidence="1">Amino-acid biosynthesis; L-histidine biosynthesis; L-histidine from 5-phospho-alpha-D-ribose 1-diphosphate: step 4/9.</text>
</comment>
<comment type="subcellular location">
    <subcellularLocation>
        <location evidence="1">Cytoplasm</location>
    </subcellularLocation>
</comment>
<comment type="similarity">
    <text evidence="1">Belongs to the HisA/HisF family.</text>
</comment>
<reference key="1">
    <citation type="submission" date="2008-06" db="EMBL/GenBank/DDBJ databases">
        <title>Complete sequence of Chlorobium phaeobacteroides BS1.</title>
        <authorList>
            <consortium name="US DOE Joint Genome Institute"/>
            <person name="Lucas S."/>
            <person name="Copeland A."/>
            <person name="Lapidus A."/>
            <person name="Glavina del Rio T."/>
            <person name="Dalin E."/>
            <person name="Tice H."/>
            <person name="Bruce D."/>
            <person name="Goodwin L."/>
            <person name="Pitluck S."/>
            <person name="Schmutz J."/>
            <person name="Larimer F."/>
            <person name="Land M."/>
            <person name="Hauser L."/>
            <person name="Kyrpides N."/>
            <person name="Ovchinnikova G."/>
            <person name="Li T."/>
            <person name="Liu Z."/>
            <person name="Zhao F."/>
            <person name="Overmann J."/>
            <person name="Bryant D.A."/>
            <person name="Richardson P."/>
        </authorList>
    </citation>
    <scope>NUCLEOTIDE SEQUENCE [LARGE SCALE GENOMIC DNA]</scope>
    <source>
        <strain>BS1</strain>
    </source>
</reference>
<dbReference type="EC" id="5.3.1.16" evidence="1"/>
<dbReference type="EMBL" id="CP001101">
    <property type="protein sequence ID" value="ACE03439.1"/>
    <property type="molecule type" value="Genomic_DNA"/>
</dbReference>
<dbReference type="SMR" id="B3EM61"/>
<dbReference type="STRING" id="331678.Cphamn1_0475"/>
<dbReference type="KEGG" id="cpb:Cphamn1_0475"/>
<dbReference type="eggNOG" id="COG0106">
    <property type="taxonomic scope" value="Bacteria"/>
</dbReference>
<dbReference type="HOGENOM" id="CLU_048577_1_2_10"/>
<dbReference type="OrthoDB" id="9807749at2"/>
<dbReference type="UniPathway" id="UPA00031">
    <property type="reaction ID" value="UER00009"/>
</dbReference>
<dbReference type="GO" id="GO:0005737">
    <property type="term" value="C:cytoplasm"/>
    <property type="evidence" value="ECO:0007669"/>
    <property type="project" value="UniProtKB-SubCell"/>
</dbReference>
<dbReference type="GO" id="GO:0003949">
    <property type="term" value="F:1-(5-phosphoribosyl)-5-[(5-phosphoribosylamino)methylideneamino]imidazole-4-carboxamide isomerase activity"/>
    <property type="evidence" value="ECO:0007669"/>
    <property type="project" value="UniProtKB-UniRule"/>
</dbReference>
<dbReference type="GO" id="GO:0000105">
    <property type="term" value="P:L-histidine biosynthetic process"/>
    <property type="evidence" value="ECO:0007669"/>
    <property type="project" value="UniProtKB-UniRule"/>
</dbReference>
<dbReference type="GO" id="GO:0000162">
    <property type="term" value="P:L-tryptophan biosynthetic process"/>
    <property type="evidence" value="ECO:0007669"/>
    <property type="project" value="TreeGrafter"/>
</dbReference>
<dbReference type="CDD" id="cd04732">
    <property type="entry name" value="HisA"/>
    <property type="match status" value="1"/>
</dbReference>
<dbReference type="FunFam" id="3.20.20.70:FF:000009">
    <property type="entry name" value="1-(5-phosphoribosyl)-5-[(5-phosphoribosylamino)methylideneamino] imidazole-4-carboxamide isomerase"/>
    <property type="match status" value="1"/>
</dbReference>
<dbReference type="Gene3D" id="3.20.20.70">
    <property type="entry name" value="Aldolase class I"/>
    <property type="match status" value="1"/>
</dbReference>
<dbReference type="HAMAP" id="MF_01014">
    <property type="entry name" value="HisA"/>
    <property type="match status" value="1"/>
</dbReference>
<dbReference type="InterPro" id="IPR013785">
    <property type="entry name" value="Aldolase_TIM"/>
</dbReference>
<dbReference type="InterPro" id="IPR006062">
    <property type="entry name" value="His_biosynth"/>
</dbReference>
<dbReference type="InterPro" id="IPR006063">
    <property type="entry name" value="HisA_bact_arch"/>
</dbReference>
<dbReference type="InterPro" id="IPR044524">
    <property type="entry name" value="Isoase_HisA-like"/>
</dbReference>
<dbReference type="InterPro" id="IPR023016">
    <property type="entry name" value="Isoase_HisA-like_bact"/>
</dbReference>
<dbReference type="InterPro" id="IPR011060">
    <property type="entry name" value="RibuloseP-bd_barrel"/>
</dbReference>
<dbReference type="NCBIfam" id="TIGR00007">
    <property type="entry name" value="1-(5-phosphoribosyl)-5-[(5-phosphoribosylamino)methylideneamino]imidazole-4-carboxamide isomerase"/>
    <property type="match status" value="1"/>
</dbReference>
<dbReference type="PANTHER" id="PTHR43090">
    <property type="entry name" value="1-(5-PHOSPHORIBOSYL)-5-[(5-PHOSPHORIBOSYLAMINO)METHYLIDENEAMINO] IMIDAZOLE-4-CARBOXAMIDE ISOMERASE"/>
    <property type="match status" value="1"/>
</dbReference>
<dbReference type="PANTHER" id="PTHR43090:SF2">
    <property type="entry name" value="1-(5-PHOSPHORIBOSYL)-5-[(5-PHOSPHORIBOSYLAMINO)METHYLIDENEAMINO] IMIDAZOLE-4-CARBOXAMIDE ISOMERASE"/>
    <property type="match status" value="1"/>
</dbReference>
<dbReference type="Pfam" id="PF00977">
    <property type="entry name" value="His_biosynth"/>
    <property type="match status" value="1"/>
</dbReference>
<dbReference type="SUPFAM" id="SSF51366">
    <property type="entry name" value="Ribulose-phoshate binding barrel"/>
    <property type="match status" value="1"/>
</dbReference>
<feature type="chain" id="PRO_1000135094" description="1-(5-phosphoribosyl)-5-[(5-phosphoribosylamino)methylideneamino] imidazole-4-carboxamide isomerase">
    <location>
        <begin position="1"/>
        <end position="260"/>
    </location>
</feature>
<feature type="active site" description="Proton acceptor" evidence="1">
    <location>
        <position position="8"/>
    </location>
</feature>
<feature type="active site" description="Proton donor" evidence="1">
    <location>
        <position position="130"/>
    </location>
</feature>
<sequence>MLIIPAIDIKDGKCVRLTRGEFDKKKIYLDNPRDMAIIWRKQNAKMIHIVDLDAALTGKLVNFEKIREIVTDLDIPVQVGGGLRSVDAVEKYLDIGVSRVVIGSAAVTNPGLVEDLLKRYSPSQIVVGIDAENGIPKIKGWTESSGMQDYELALQMKKLGVKRIIYTDIACDGMMQGVGFESTKRFVEKAGMRVTASGGVTGSEDLRKLQTLEKYGVDSVIIGKALYENNFSCQKLWYNFEKCIGIDCDFSTALKKECCS</sequence>
<evidence type="ECO:0000255" key="1">
    <source>
        <dbReference type="HAMAP-Rule" id="MF_01014"/>
    </source>
</evidence>
<name>HIS4_CHLPB</name>